<sequence length="297" mass="32506">MKKAIFGAMTALITPFKNGKLDEAGYEKLIKRQIKNGIDAIVPVGTTGESATLTHDEHRICIEIAVETCKNTKVKVLAGAGSNATHEAVDLAEFAEAHGADGILSVAPYYNKPTQEGLYLHYKNIANSVKIPVLLYNVPGRTGCDILPETVIRLFNDCENIYGVKEASGSIDRCVDLLAHEPKLYVLSGEDAINYPILSNGGKGVISVTSNLLPDQTAALTHYALDNEFLKAKEINDRLYNINKIMFCESNPIPIKAAMFIAGLIDTLEYRLPLCNPSVDNLKKIEETMKSYDIKGF</sequence>
<comment type="function">
    <text evidence="1">Catalyzes the condensation of (S)-aspartate-beta-semialdehyde [(S)-ASA] and pyruvate to 4-hydroxy-tetrahydrodipicolinate (HTPA).</text>
</comment>
<comment type="catalytic activity">
    <reaction evidence="1">
        <text>L-aspartate 4-semialdehyde + pyruvate = (2S,4S)-4-hydroxy-2,3,4,5-tetrahydrodipicolinate + H2O + H(+)</text>
        <dbReference type="Rhea" id="RHEA:34171"/>
        <dbReference type="ChEBI" id="CHEBI:15361"/>
        <dbReference type="ChEBI" id="CHEBI:15377"/>
        <dbReference type="ChEBI" id="CHEBI:15378"/>
        <dbReference type="ChEBI" id="CHEBI:67139"/>
        <dbReference type="ChEBI" id="CHEBI:537519"/>
        <dbReference type="EC" id="4.3.3.7"/>
    </reaction>
</comment>
<comment type="pathway">
    <text evidence="1">Amino-acid biosynthesis; L-lysine biosynthesis via DAP pathway; (S)-tetrahydrodipicolinate from L-aspartate: step 3/4.</text>
</comment>
<comment type="subunit">
    <text evidence="1">Homotetramer; dimer of dimers.</text>
</comment>
<comment type="subcellular location">
    <subcellularLocation>
        <location evidence="1">Cytoplasm</location>
    </subcellularLocation>
</comment>
<comment type="similarity">
    <text evidence="1">Belongs to the DapA family.</text>
</comment>
<comment type="caution">
    <text evidence="2">Was originally thought to be a dihydrodipicolinate synthase (DHDPS), catalyzing the condensation of (S)-aspartate-beta-semialdehyde [(S)-ASA] and pyruvate to dihydrodipicolinate (DHDP). However, it was shown in E.coli that the product of the enzymatic reaction is not dihydrodipicolinate but in fact (4S)-4-hydroxy-2,3,4,5-tetrahydro-(2S)-dipicolinic acid (HTPA), and that the consecutive dehydration reaction leading to DHDP is not spontaneous but catalyzed by DapB.</text>
</comment>
<name>DAPA_CAMFF</name>
<feature type="chain" id="PRO_0000340940" description="4-hydroxy-tetrahydrodipicolinate synthase">
    <location>
        <begin position="1"/>
        <end position="297"/>
    </location>
</feature>
<feature type="active site" description="Proton donor/acceptor" evidence="1">
    <location>
        <position position="136"/>
    </location>
</feature>
<feature type="active site" description="Schiff-base intermediate with substrate" evidence="1">
    <location>
        <position position="165"/>
    </location>
</feature>
<feature type="binding site" evidence="1">
    <location>
        <position position="47"/>
    </location>
    <ligand>
        <name>pyruvate</name>
        <dbReference type="ChEBI" id="CHEBI:15361"/>
    </ligand>
</feature>
<feature type="binding site" evidence="1">
    <location>
        <position position="206"/>
    </location>
    <ligand>
        <name>pyruvate</name>
        <dbReference type="ChEBI" id="CHEBI:15361"/>
    </ligand>
</feature>
<feature type="site" description="Part of a proton relay during catalysis" evidence="1">
    <location>
        <position position="46"/>
    </location>
</feature>
<feature type="site" description="Part of a proton relay during catalysis" evidence="1">
    <location>
        <position position="110"/>
    </location>
</feature>
<reference key="1">
    <citation type="submission" date="2006-11" db="EMBL/GenBank/DDBJ databases">
        <title>Sequence of Campylobacter fetus subsp. fetus 82-40.</title>
        <authorList>
            <person name="Fouts D.E."/>
            <person name="Nelson K.E."/>
        </authorList>
    </citation>
    <scope>NUCLEOTIDE SEQUENCE [LARGE SCALE GENOMIC DNA]</scope>
    <source>
        <strain>82-40</strain>
    </source>
</reference>
<dbReference type="EC" id="4.3.3.7" evidence="1"/>
<dbReference type="EMBL" id="CP000487">
    <property type="protein sequence ID" value="ABK82563.1"/>
    <property type="molecule type" value="Genomic_DNA"/>
</dbReference>
<dbReference type="RefSeq" id="WP_002849227.1">
    <property type="nucleotide sequence ID" value="NC_008599.1"/>
</dbReference>
<dbReference type="SMR" id="A0RP26"/>
<dbReference type="GeneID" id="61064622"/>
<dbReference type="KEGG" id="cff:CFF8240_0784"/>
<dbReference type="eggNOG" id="COG0329">
    <property type="taxonomic scope" value="Bacteria"/>
</dbReference>
<dbReference type="HOGENOM" id="CLU_049343_7_1_7"/>
<dbReference type="UniPathway" id="UPA00034">
    <property type="reaction ID" value="UER00017"/>
</dbReference>
<dbReference type="Proteomes" id="UP000000760">
    <property type="component" value="Chromosome"/>
</dbReference>
<dbReference type="GO" id="GO:0005829">
    <property type="term" value="C:cytosol"/>
    <property type="evidence" value="ECO:0007669"/>
    <property type="project" value="TreeGrafter"/>
</dbReference>
<dbReference type="GO" id="GO:0008840">
    <property type="term" value="F:4-hydroxy-tetrahydrodipicolinate synthase activity"/>
    <property type="evidence" value="ECO:0007669"/>
    <property type="project" value="UniProtKB-UniRule"/>
</dbReference>
<dbReference type="GO" id="GO:0019877">
    <property type="term" value="P:diaminopimelate biosynthetic process"/>
    <property type="evidence" value="ECO:0007669"/>
    <property type="project" value="UniProtKB-UniRule"/>
</dbReference>
<dbReference type="GO" id="GO:0009089">
    <property type="term" value="P:lysine biosynthetic process via diaminopimelate"/>
    <property type="evidence" value="ECO:0007669"/>
    <property type="project" value="UniProtKB-UniRule"/>
</dbReference>
<dbReference type="CDD" id="cd00950">
    <property type="entry name" value="DHDPS"/>
    <property type="match status" value="1"/>
</dbReference>
<dbReference type="Gene3D" id="3.20.20.70">
    <property type="entry name" value="Aldolase class I"/>
    <property type="match status" value="1"/>
</dbReference>
<dbReference type="HAMAP" id="MF_00418">
    <property type="entry name" value="DapA"/>
    <property type="match status" value="1"/>
</dbReference>
<dbReference type="InterPro" id="IPR013785">
    <property type="entry name" value="Aldolase_TIM"/>
</dbReference>
<dbReference type="InterPro" id="IPR005263">
    <property type="entry name" value="DapA"/>
</dbReference>
<dbReference type="InterPro" id="IPR002220">
    <property type="entry name" value="DapA-like"/>
</dbReference>
<dbReference type="InterPro" id="IPR020625">
    <property type="entry name" value="Schiff_base-form_aldolases_AS"/>
</dbReference>
<dbReference type="InterPro" id="IPR020624">
    <property type="entry name" value="Schiff_base-form_aldolases_CS"/>
</dbReference>
<dbReference type="NCBIfam" id="TIGR00674">
    <property type="entry name" value="dapA"/>
    <property type="match status" value="1"/>
</dbReference>
<dbReference type="PANTHER" id="PTHR12128:SF66">
    <property type="entry name" value="4-HYDROXY-2-OXOGLUTARATE ALDOLASE, MITOCHONDRIAL"/>
    <property type="match status" value="1"/>
</dbReference>
<dbReference type="PANTHER" id="PTHR12128">
    <property type="entry name" value="DIHYDRODIPICOLINATE SYNTHASE"/>
    <property type="match status" value="1"/>
</dbReference>
<dbReference type="Pfam" id="PF00701">
    <property type="entry name" value="DHDPS"/>
    <property type="match status" value="1"/>
</dbReference>
<dbReference type="PIRSF" id="PIRSF001365">
    <property type="entry name" value="DHDPS"/>
    <property type="match status" value="1"/>
</dbReference>
<dbReference type="PRINTS" id="PR00146">
    <property type="entry name" value="DHPICSNTHASE"/>
</dbReference>
<dbReference type="SMART" id="SM01130">
    <property type="entry name" value="DHDPS"/>
    <property type="match status" value="1"/>
</dbReference>
<dbReference type="SUPFAM" id="SSF51569">
    <property type="entry name" value="Aldolase"/>
    <property type="match status" value="1"/>
</dbReference>
<dbReference type="PROSITE" id="PS00665">
    <property type="entry name" value="DHDPS_1"/>
    <property type="match status" value="1"/>
</dbReference>
<dbReference type="PROSITE" id="PS00666">
    <property type="entry name" value="DHDPS_2"/>
    <property type="match status" value="1"/>
</dbReference>
<accession>A0RP26</accession>
<gene>
    <name evidence="1" type="primary">dapA</name>
    <name type="ordered locus">CFF8240_0784</name>
</gene>
<organism>
    <name type="scientific">Campylobacter fetus subsp. fetus (strain 82-40)</name>
    <dbReference type="NCBI Taxonomy" id="360106"/>
    <lineage>
        <taxon>Bacteria</taxon>
        <taxon>Pseudomonadati</taxon>
        <taxon>Campylobacterota</taxon>
        <taxon>Epsilonproteobacteria</taxon>
        <taxon>Campylobacterales</taxon>
        <taxon>Campylobacteraceae</taxon>
        <taxon>Campylobacter</taxon>
    </lineage>
</organism>
<evidence type="ECO:0000255" key="1">
    <source>
        <dbReference type="HAMAP-Rule" id="MF_00418"/>
    </source>
</evidence>
<evidence type="ECO:0000305" key="2"/>
<proteinExistence type="inferred from homology"/>
<keyword id="KW-0028">Amino-acid biosynthesis</keyword>
<keyword id="KW-0963">Cytoplasm</keyword>
<keyword id="KW-0220">Diaminopimelate biosynthesis</keyword>
<keyword id="KW-0456">Lyase</keyword>
<keyword id="KW-0457">Lysine biosynthesis</keyword>
<keyword id="KW-0704">Schiff base</keyword>
<protein>
    <recommendedName>
        <fullName evidence="1">4-hydroxy-tetrahydrodipicolinate synthase</fullName>
        <shortName evidence="1">HTPA synthase</shortName>
        <ecNumber evidence="1">4.3.3.7</ecNumber>
    </recommendedName>
</protein>